<organism>
    <name type="scientific">Gadus morhua</name>
    <name type="common">Atlantic cod</name>
    <dbReference type="NCBI Taxonomy" id="8049"/>
    <lineage>
        <taxon>Eukaryota</taxon>
        <taxon>Metazoa</taxon>
        <taxon>Chordata</taxon>
        <taxon>Craniata</taxon>
        <taxon>Vertebrata</taxon>
        <taxon>Euteleostomi</taxon>
        <taxon>Actinopterygii</taxon>
        <taxon>Neopterygii</taxon>
        <taxon>Teleostei</taxon>
        <taxon>Neoteleostei</taxon>
        <taxon>Acanthomorphata</taxon>
        <taxon>Zeiogadaria</taxon>
        <taxon>Gadariae</taxon>
        <taxon>Gadiformes</taxon>
        <taxon>Gadoidei</taxon>
        <taxon>Gadidae</taxon>
        <taxon>Gadus</taxon>
    </lineage>
</organism>
<name>NU4LM_GADMO</name>
<gene>
    <name type="primary">MT-ND4L</name>
    <name type="synonym">MTND4L</name>
    <name type="synonym">NADH4L</name>
    <name type="synonym">ND4L</name>
</gene>
<dbReference type="EC" id="7.1.1.2"/>
<dbReference type="EMBL" id="X17661">
    <property type="protein sequence ID" value="CAA35658.1"/>
    <property type="status" value="ALT_INIT"/>
    <property type="molecule type" value="Genomic_DNA"/>
</dbReference>
<dbReference type="EMBL" id="X99772">
    <property type="protein sequence ID" value="CAA68105.1"/>
    <property type="molecule type" value="Genomic_DNA"/>
</dbReference>
<dbReference type="PIR" id="S08426">
    <property type="entry name" value="S08426"/>
</dbReference>
<dbReference type="RefSeq" id="NP_007817.1">
    <property type="nucleotide sequence ID" value="NC_002081.1"/>
</dbReference>
<dbReference type="SMR" id="P23633"/>
<dbReference type="GeneID" id="808456"/>
<dbReference type="CTD" id="4539"/>
<dbReference type="OrthoDB" id="6146597at2759"/>
<dbReference type="Proteomes" id="UP000694546">
    <property type="component" value="Unplaced"/>
</dbReference>
<dbReference type="GO" id="GO:0031966">
    <property type="term" value="C:mitochondrial membrane"/>
    <property type="evidence" value="ECO:0007669"/>
    <property type="project" value="UniProtKB-SubCell"/>
</dbReference>
<dbReference type="GO" id="GO:0045271">
    <property type="term" value="C:respiratory chain complex I"/>
    <property type="evidence" value="ECO:0000250"/>
    <property type="project" value="UniProtKB"/>
</dbReference>
<dbReference type="GO" id="GO:0008137">
    <property type="term" value="F:NADH dehydrogenase (ubiquinone) activity"/>
    <property type="evidence" value="ECO:0000250"/>
    <property type="project" value="UniProtKB"/>
</dbReference>
<dbReference type="GO" id="GO:0042773">
    <property type="term" value="P:ATP synthesis coupled electron transport"/>
    <property type="evidence" value="ECO:0007669"/>
    <property type="project" value="InterPro"/>
</dbReference>
<dbReference type="FunFam" id="1.10.287.3510:FF:000002">
    <property type="entry name" value="NADH-ubiquinone oxidoreductase chain 4L"/>
    <property type="match status" value="1"/>
</dbReference>
<dbReference type="Gene3D" id="1.10.287.3510">
    <property type="match status" value="1"/>
</dbReference>
<dbReference type="InterPro" id="IPR001133">
    <property type="entry name" value="NADH_UbQ_OxRdtase_chain4L/K"/>
</dbReference>
<dbReference type="InterPro" id="IPR039428">
    <property type="entry name" value="NUOK/Mnh_C1-like"/>
</dbReference>
<dbReference type="PANTHER" id="PTHR11434:SF0">
    <property type="entry name" value="NADH-UBIQUINONE OXIDOREDUCTASE CHAIN 4L"/>
    <property type="match status" value="1"/>
</dbReference>
<dbReference type="PANTHER" id="PTHR11434">
    <property type="entry name" value="NADH-UBIQUINONE OXIDOREDUCTASE SUBUNIT ND4L"/>
    <property type="match status" value="1"/>
</dbReference>
<dbReference type="Pfam" id="PF00420">
    <property type="entry name" value="Oxidored_q2"/>
    <property type="match status" value="1"/>
</dbReference>
<evidence type="ECO:0000250" key="1"/>
<evidence type="ECO:0000250" key="2">
    <source>
        <dbReference type="UniProtKB" id="P03901"/>
    </source>
</evidence>
<evidence type="ECO:0000255" key="3"/>
<evidence type="ECO:0000305" key="4"/>
<proteinExistence type="inferred from homology"/>
<feature type="chain" id="PRO_0000118424" description="NADH-ubiquinone oxidoreductase chain 4L">
    <location>
        <begin position="1"/>
        <end position="98"/>
    </location>
</feature>
<feature type="transmembrane region" description="Helical" evidence="3">
    <location>
        <begin position="1"/>
        <end position="21"/>
    </location>
</feature>
<feature type="transmembrane region" description="Helical" evidence="3">
    <location>
        <begin position="26"/>
        <end position="46"/>
    </location>
</feature>
<feature type="transmembrane region" description="Helical" evidence="3">
    <location>
        <begin position="59"/>
        <end position="79"/>
    </location>
</feature>
<sequence>MTPTHFTISSAFLLGMMGLAFHRTHLLSALLCLEAMMLALFIALSLWSLQLDATGCSTAPMLMLAFSACEASAGLALLVATARTHGTDHMQALNLLQC</sequence>
<keyword id="KW-0249">Electron transport</keyword>
<keyword id="KW-0472">Membrane</keyword>
<keyword id="KW-0496">Mitochondrion</keyword>
<keyword id="KW-0520">NAD</keyword>
<keyword id="KW-1185">Reference proteome</keyword>
<keyword id="KW-0679">Respiratory chain</keyword>
<keyword id="KW-1278">Translocase</keyword>
<keyword id="KW-0812">Transmembrane</keyword>
<keyword id="KW-1133">Transmembrane helix</keyword>
<keyword id="KW-0813">Transport</keyword>
<keyword id="KW-0830">Ubiquinone</keyword>
<accession>P23633</accession>
<protein>
    <recommendedName>
        <fullName>NADH-ubiquinone oxidoreductase chain 4L</fullName>
        <ecNumber>7.1.1.2</ecNumber>
    </recommendedName>
    <alternativeName>
        <fullName>NADH dehydrogenase subunit 4L</fullName>
    </alternativeName>
</protein>
<comment type="function">
    <text evidence="2">Core subunit of the mitochondrial membrane respiratory chain NADH dehydrogenase (Complex I) which catalyzes electron transfer from NADH through the respiratory chain, using ubiquinone as an electron acceptor. Part of the enzyme membrane arm which is embedded in the lipid bilayer and involved in proton translocation.</text>
</comment>
<comment type="catalytic activity">
    <reaction evidence="2">
        <text>a ubiquinone + NADH + 5 H(+)(in) = a ubiquinol + NAD(+) + 4 H(+)(out)</text>
        <dbReference type="Rhea" id="RHEA:29091"/>
        <dbReference type="Rhea" id="RHEA-COMP:9565"/>
        <dbReference type="Rhea" id="RHEA-COMP:9566"/>
        <dbReference type="ChEBI" id="CHEBI:15378"/>
        <dbReference type="ChEBI" id="CHEBI:16389"/>
        <dbReference type="ChEBI" id="CHEBI:17976"/>
        <dbReference type="ChEBI" id="CHEBI:57540"/>
        <dbReference type="ChEBI" id="CHEBI:57945"/>
        <dbReference type="EC" id="7.1.1.2"/>
    </reaction>
    <physiologicalReaction direction="left-to-right" evidence="2">
        <dbReference type="Rhea" id="RHEA:29092"/>
    </physiologicalReaction>
</comment>
<comment type="subcellular location">
    <subcellularLocation>
        <location evidence="1">Mitochondrion membrane</location>
        <topology evidence="1">Multi-pass membrane protein</topology>
    </subcellularLocation>
</comment>
<comment type="similarity">
    <text evidence="4">Belongs to the complex I subunit 4L family.</text>
</comment>
<comment type="sequence caution" evidence="4">
    <conflict type="erroneous initiation">
        <sequence resource="EMBL-CDS" id="CAA35658"/>
    </conflict>
</comment>
<geneLocation type="mitochondrion"/>
<reference key="1">
    <citation type="journal article" date="1990" name="Nucleic Acids Res.">
        <title>Organization of the mitochondrial genome of Atlantic cod, Gadus morhua.</title>
        <authorList>
            <person name="Johansen S."/>
            <person name="Guddal P.H."/>
            <person name="Johansen T."/>
        </authorList>
    </citation>
    <scope>NUCLEOTIDE SEQUENCE [GENOMIC DNA]</scope>
    <source>
        <strain>Norwegian coastal 1</strain>
        <tissue>Liver</tissue>
    </source>
</reference>
<reference key="2">
    <citation type="journal article" date="1996" name="Mol. Mar. Biol. Biotechnol.">
        <title>The complete mitochondrial DNA sequence of Atlantic cod (Gadus morhua): relevance to taxonomic studies among codfishes.</title>
        <authorList>
            <person name="Johansen S."/>
            <person name="Bakke I."/>
        </authorList>
    </citation>
    <scope>NUCLEOTIDE SEQUENCE [GENOMIC DNA]</scope>
    <source>
        <strain>Norwegian coastal 1</strain>
    </source>
</reference>